<gene>
    <name type="primary">prph</name>
    <name type="synonym">if3</name>
</gene>
<feature type="chain" id="PRO_0000063782" description="Peripherin">
    <location>
        <begin position="1"/>
        <end position="456"/>
    </location>
</feature>
<feature type="domain" description="IF rod" evidence="3">
    <location>
        <begin position="88"/>
        <end position="397"/>
    </location>
</feature>
<feature type="region of interest" description="Head">
    <location>
        <begin position="1"/>
        <end position="90"/>
    </location>
</feature>
<feature type="region of interest" description="Disordered" evidence="4">
    <location>
        <begin position="1"/>
        <end position="55"/>
    </location>
</feature>
<feature type="region of interest" description="Coil 1A">
    <location>
        <begin position="91"/>
        <end position="123"/>
    </location>
</feature>
<feature type="region of interest" description="Linker 1">
    <location>
        <begin position="124"/>
        <end position="134"/>
    </location>
</feature>
<feature type="region of interest" description="Coil 1B">
    <location>
        <begin position="135"/>
        <end position="230"/>
    </location>
</feature>
<feature type="region of interest" description="Linker 2">
    <location>
        <begin position="231"/>
        <end position="252"/>
    </location>
</feature>
<feature type="region of interest" description="Coil 2">
    <location>
        <begin position="253"/>
        <end position="395"/>
    </location>
</feature>
<feature type="region of interest" description="Tail">
    <location>
        <begin position="396"/>
        <end position="456"/>
    </location>
</feature>
<feature type="region of interest" description="Disordered" evidence="4">
    <location>
        <begin position="411"/>
        <end position="456"/>
    </location>
</feature>
<feature type="compositionally biased region" description="Polar residues" evidence="4">
    <location>
        <begin position="1"/>
        <end position="14"/>
    </location>
</feature>
<feature type="compositionally biased region" description="Low complexity" evidence="4">
    <location>
        <begin position="16"/>
        <end position="55"/>
    </location>
</feature>
<feature type="compositionally biased region" description="Basic and acidic residues" evidence="4">
    <location>
        <begin position="434"/>
        <end position="456"/>
    </location>
</feature>
<evidence type="ECO:0000250" key="1">
    <source>
        <dbReference type="UniProtKB" id="P15331"/>
    </source>
</evidence>
<evidence type="ECO:0000250" key="2">
    <source>
        <dbReference type="UniProtKB" id="P21807"/>
    </source>
</evidence>
<evidence type="ECO:0000255" key="3">
    <source>
        <dbReference type="PROSITE-ProRule" id="PRU01188"/>
    </source>
</evidence>
<evidence type="ECO:0000256" key="4">
    <source>
        <dbReference type="SAM" id="MobiDB-lite"/>
    </source>
</evidence>
<evidence type="ECO:0000269" key="5">
    <source>
    </source>
</evidence>
<evidence type="ECO:0000305" key="6"/>
<keyword id="KW-0966">Cell projection</keyword>
<keyword id="KW-0175">Coiled coil</keyword>
<keyword id="KW-0963">Cytoplasm</keyword>
<keyword id="KW-0206">Cytoskeleton</keyword>
<keyword id="KW-0403">Intermediate filament</keyword>
<keyword id="KW-0597">Phosphoprotein</keyword>
<keyword id="KW-1185">Reference proteome</keyword>
<proteinExistence type="evidence at transcript level"/>
<reference key="1">
    <citation type="journal article" date="1989" name="Development">
        <title>XIF3, a Xenopus peripherin gene, requires an inductive signal for enhanced expression in anterior neural tissue.</title>
        <authorList>
            <person name="Sharpe C.R."/>
            <person name="Pluck A."/>
            <person name="Gurdon J.B."/>
        </authorList>
    </citation>
    <scope>NUCLEOTIDE SEQUENCE [MRNA]</scope>
    <scope>DEVELOPMENTAL STAGE</scope>
</reference>
<reference key="2">
    <citation type="journal article" date="1988" name="Development">
        <title>Developmental expression of a neurofilament-M and two vimentin-like genes in Xenopus laevis.</title>
        <authorList>
            <person name="Sharpe C.R."/>
        </authorList>
    </citation>
    <scope>NUCLEOTIDE SEQUENCE [MRNA] OF 323-396</scope>
</reference>
<accession>P48676</accession>
<name>PERI_XENLA</name>
<dbReference type="EMBL" id="X16570">
    <property type="protein sequence ID" value="CAA34591.1"/>
    <property type="status" value="ALT_FRAME"/>
    <property type="molecule type" value="mRNA"/>
</dbReference>
<dbReference type="PIR" id="A60090">
    <property type="entry name" value="A60090"/>
</dbReference>
<dbReference type="SMR" id="P48676"/>
<dbReference type="AGR" id="Xenbase:XB-GENE-866295"/>
<dbReference type="Xenbase" id="XB-GENE-866295">
    <property type="gene designation" value="prph.L"/>
</dbReference>
<dbReference type="Proteomes" id="UP000186698">
    <property type="component" value="Unplaced"/>
</dbReference>
<dbReference type="GO" id="GO:0030424">
    <property type="term" value="C:axon"/>
    <property type="evidence" value="ECO:0000318"/>
    <property type="project" value="GO_Central"/>
</dbReference>
<dbReference type="GO" id="GO:0005737">
    <property type="term" value="C:cytoplasm"/>
    <property type="evidence" value="ECO:0007669"/>
    <property type="project" value="UniProtKB-KW"/>
</dbReference>
<dbReference type="GO" id="GO:0043204">
    <property type="term" value="C:perikaryon"/>
    <property type="evidence" value="ECO:0007669"/>
    <property type="project" value="UniProtKB-SubCell"/>
</dbReference>
<dbReference type="GO" id="GO:0005886">
    <property type="term" value="C:plasma membrane"/>
    <property type="evidence" value="ECO:0000318"/>
    <property type="project" value="GO_Central"/>
</dbReference>
<dbReference type="GO" id="GO:0045098">
    <property type="term" value="C:type III intermediate filament"/>
    <property type="evidence" value="ECO:0000318"/>
    <property type="project" value="GO_Central"/>
</dbReference>
<dbReference type="GO" id="GO:0005200">
    <property type="term" value="F:structural constituent of cytoskeleton"/>
    <property type="evidence" value="ECO:0000318"/>
    <property type="project" value="GO_Central"/>
</dbReference>
<dbReference type="GO" id="GO:0045109">
    <property type="term" value="P:intermediate filament organization"/>
    <property type="evidence" value="ECO:0000318"/>
    <property type="project" value="GO_Central"/>
</dbReference>
<dbReference type="FunFam" id="1.20.5.1160:FF:000001">
    <property type="entry name" value="Keratin type II"/>
    <property type="match status" value="1"/>
</dbReference>
<dbReference type="FunFam" id="1.20.5.170:FF:000002">
    <property type="entry name" value="Type I keratin KA11"/>
    <property type="match status" value="1"/>
</dbReference>
<dbReference type="FunFam" id="1.20.5.500:FF:000001">
    <property type="entry name" value="Type II keratin 23"/>
    <property type="match status" value="1"/>
</dbReference>
<dbReference type="Gene3D" id="1.20.5.170">
    <property type="match status" value="1"/>
</dbReference>
<dbReference type="Gene3D" id="1.20.5.500">
    <property type="entry name" value="Single helix bin"/>
    <property type="match status" value="1"/>
</dbReference>
<dbReference type="Gene3D" id="1.20.5.1160">
    <property type="entry name" value="Vasodilator-stimulated phosphoprotein"/>
    <property type="match status" value="1"/>
</dbReference>
<dbReference type="InterPro" id="IPR018039">
    <property type="entry name" value="IF_conserved"/>
</dbReference>
<dbReference type="InterPro" id="IPR039008">
    <property type="entry name" value="IF_rod_dom"/>
</dbReference>
<dbReference type="InterPro" id="IPR006821">
    <property type="entry name" value="Intermed_filament_DNA-bd"/>
</dbReference>
<dbReference type="InterPro" id="IPR050405">
    <property type="entry name" value="Intermediate_filament"/>
</dbReference>
<dbReference type="InterPro" id="IPR002957">
    <property type="entry name" value="Keratin_I"/>
</dbReference>
<dbReference type="PANTHER" id="PTHR45652">
    <property type="entry name" value="GLIAL FIBRILLARY ACIDIC PROTEIN"/>
    <property type="match status" value="1"/>
</dbReference>
<dbReference type="PANTHER" id="PTHR45652:SF14">
    <property type="entry name" value="PERIPHERIN"/>
    <property type="match status" value="1"/>
</dbReference>
<dbReference type="Pfam" id="PF00038">
    <property type="entry name" value="Filament"/>
    <property type="match status" value="1"/>
</dbReference>
<dbReference type="Pfam" id="PF04732">
    <property type="entry name" value="Filament_head"/>
    <property type="match status" value="1"/>
</dbReference>
<dbReference type="PRINTS" id="PR01248">
    <property type="entry name" value="TYPE1KERATIN"/>
</dbReference>
<dbReference type="SMART" id="SM01391">
    <property type="entry name" value="Filament"/>
    <property type="match status" value="1"/>
</dbReference>
<dbReference type="SUPFAM" id="SSF64593">
    <property type="entry name" value="Intermediate filament protein, coiled coil region"/>
    <property type="match status" value="2"/>
</dbReference>
<dbReference type="PROSITE" id="PS00226">
    <property type="entry name" value="IF_ROD_1"/>
    <property type="match status" value="1"/>
</dbReference>
<dbReference type="PROSITE" id="PS51842">
    <property type="entry name" value="IF_ROD_2"/>
    <property type="match status" value="1"/>
</dbReference>
<sequence>MSHSGLRSTSTSYRRTLGSSPVPSSYSSSSRLSTSRHFGSPSPGPSSRSSSSAFRVRSSTPVRVSLDRVDFSVAEAVNQEFLTTRSNEKAELQELNDRFASFIEKVRYLEQQNAVLVTEINQARSKEPTRASDLCQQELRELRKQLELLGKDRDHIQVERDNFAEDLAFLKQRLDEEVHKREDAENNLVLFRKDVDDATLSRLELERKIESLMDEIEFLKKLHEEELNDVQVSVQAQPVHMEIEAAKQPDLTSALRDIRSQYETIAAKNVQESEDWYKSKFADLSDAANRNSEALRQAKQDMNESRRQIQSLTCEVDGLKGTNEALLRQMKNMEEQFGMEAANYQDTIGGLEQEVQHMKEEMSRHLREYQDLLNVKMALDIEIATYRKLLEGEESRIAVPIHSLTSLSIKSPAAPEIDPSTETHTRKTVAIKTIETRDGEQVVTESRKEQSSEGEK</sequence>
<comment type="function">
    <text evidence="1 2">Class-III neuronal intermediate filament protein (By similarity). My form an independent structural network without the involvement of other neurofilaments or may cooperate with other neuronal intermediate filament proteins to form a filamentous network (By similarity).</text>
</comment>
<comment type="subunit">
    <text evidence="1 2">Forms homodimers (in vitro) (By similarity). Homopolymerizes into a filamentous network (in vitro) (By similarity).</text>
</comment>
<comment type="subcellular location">
    <subcellularLocation>
        <location evidence="1">Cytoplasm</location>
        <location evidence="1">Cytoskeleton</location>
    </subcellularLocation>
    <subcellularLocation>
        <location evidence="1">Cell projection</location>
        <location evidence="1">Axon</location>
    </subcellularLocation>
    <subcellularLocation>
        <location evidence="1">Perikaryon</location>
    </subcellularLocation>
</comment>
<comment type="developmental stage">
    <text evidence="5">Expressed predominantly in anterior and dorsal structures and most strongly in the brain of the tailbud (stage 26) embryo.</text>
</comment>
<comment type="similarity">
    <text evidence="3">Belongs to the intermediate filament family.</text>
</comment>
<comment type="sequence caution" evidence="6">
    <conflict type="frameshift">
        <sequence resource="EMBL-CDS" id="CAA34591"/>
    </conflict>
</comment>
<protein>
    <recommendedName>
        <fullName>Peripherin</fullName>
    </recommendedName>
    <alternativeName>
        <fullName>Neuronal intermediate filament IF3</fullName>
    </alternativeName>
</protein>
<organism>
    <name type="scientific">Xenopus laevis</name>
    <name type="common">African clawed frog</name>
    <dbReference type="NCBI Taxonomy" id="8355"/>
    <lineage>
        <taxon>Eukaryota</taxon>
        <taxon>Metazoa</taxon>
        <taxon>Chordata</taxon>
        <taxon>Craniata</taxon>
        <taxon>Vertebrata</taxon>
        <taxon>Euteleostomi</taxon>
        <taxon>Amphibia</taxon>
        <taxon>Batrachia</taxon>
        <taxon>Anura</taxon>
        <taxon>Pipoidea</taxon>
        <taxon>Pipidae</taxon>
        <taxon>Xenopodinae</taxon>
        <taxon>Xenopus</taxon>
        <taxon>Xenopus</taxon>
    </lineage>
</organism>